<organism>
    <name type="scientific">Bacillus phage PZA</name>
    <name type="common">Bacteriophage PZA</name>
    <dbReference type="NCBI Taxonomy" id="10757"/>
    <lineage>
        <taxon>Viruses</taxon>
        <taxon>Duplodnaviria</taxon>
        <taxon>Heunggongvirae</taxon>
        <taxon>Uroviricota</taxon>
        <taxon>Caudoviricetes</taxon>
        <taxon>Salasmaviridae</taxon>
        <taxon>Picovirinae</taxon>
        <taxon>Salasvirus</taxon>
        <taxon>Salasvirus PZA</taxon>
    </lineage>
</organism>
<reference key="1">
    <citation type="journal article" date="1985" name="Gene">
        <title>Nucleotide sequence of the major early region of Bacillus subtilis phage PZA, a close relative of phi 29.</title>
        <authorList>
            <person name="Paces V."/>
            <person name="Vlcek C."/>
            <person name="Urbanek P."/>
            <person name="Hostomsky Z."/>
        </authorList>
    </citation>
    <scope>NUCLEOTIDE SEQUENCE [GENOMIC DNA]</scope>
</reference>
<sequence length="125" mass="15090">MPKTQRGIYHNLKESKYVASNNDVTFFFSSELYLNKFLDGYQEYRKKFNKKIERVAVTPWNMDMLADITFYSEVEKRGFHAWLKGDNATWREVHVYALRIMTKPSTLDWSRIQKPKLRERRKSMV</sequence>
<name>TF4_BPPZA</name>
<organismHost>
    <name type="scientific">Bacillus subtilis</name>
    <dbReference type="NCBI Taxonomy" id="1423"/>
</organismHost>
<feature type="chain" id="PRO_0000106561" description="Late genes activator p4">
    <location>
        <begin position="1"/>
        <end position="125"/>
    </location>
</feature>
<feature type="DNA-binding region" description="H-T-H motif" evidence="2">
    <location>
        <begin position="77"/>
        <end position="96"/>
    </location>
</feature>
<feature type="site" description="Interaction with host RNA polymerase and activation of the phi29 late A3 promoter" evidence="1">
    <location>
        <position position="120"/>
    </location>
</feature>
<comment type="function">
    <text evidence="1">Mediates, together with protein p6, the early to late transcriptional switch by stabilizing the binding of host RNA polymerase (RNAP) to the late A3 promoter. Activates transcription from the late A3 promoter and represses the main early promoters A2b and A2c by modifying the topology of the sequences encompassing early promoters A2c and A2b and late promoter A3 in a hairpin. Binds to a region of the A3 promoter located between nucleotides -50 and -100 relative to the transcription start site, that presents a sequence-directed curvature. Full induction of this curvature is needed for the transcription activation process.</text>
</comment>
<comment type="subunit">
    <text evidence="1">Interacts with host RNA polymerase (via C-terminus). Interacts with DNA; binds to the A2b, A2c and A3 promoters.</text>
</comment>
<comment type="similarity">
    <text evidence="3">Belongs to the phi29likevirus late genes activator p4 family.</text>
</comment>
<evidence type="ECO:0000250" key="1">
    <source>
        <dbReference type="UniProtKB" id="P03682"/>
    </source>
</evidence>
<evidence type="ECO:0000255" key="2"/>
<evidence type="ECO:0000305" key="3"/>
<protein>
    <recommendedName>
        <fullName evidence="1">Late genes activator p4</fullName>
    </recommendedName>
    <alternativeName>
        <fullName evidence="1">Gene product 4</fullName>
        <shortName evidence="1">gp4</shortName>
    </alternativeName>
    <alternativeName>
        <fullName evidence="1">Protein p4</fullName>
    </alternativeName>
</protein>
<accession>P06952</accession>
<dbReference type="EMBL" id="M11813">
    <property type="protein sequence ID" value="AAA88476.1"/>
    <property type="molecule type" value="Genomic_DNA"/>
</dbReference>
<dbReference type="PIR" id="F24528">
    <property type="entry name" value="ERBP4Z"/>
</dbReference>
<dbReference type="SMR" id="P06952"/>
<dbReference type="Proteomes" id="UP000000855">
    <property type="component" value="Segment"/>
</dbReference>
<dbReference type="GO" id="GO:0003677">
    <property type="term" value="F:DNA binding"/>
    <property type="evidence" value="ECO:0007669"/>
    <property type="project" value="UniProtKB-KW"/>
</dbReference>
<dbReference type="GO" id="GO:0003899">
    <property type="term" value="F:DNA-directed RNA polymerase activity"/>
    <property type="evidence" value="ECO:0007669"/>
    <property type="project" value="InterPro"/>
</dbReference>
<dbReference type="GO" id="GO:0016987">
    <property type="term" value="F:sigma factor activity"/>
    <property type="evidence" value="ECO:0007669"/>
    <property type="project" value="UniProtKB-KW"/>
</dbReference>
<dbReference type="Gene3D" id="3.30.70.3560">
    <property type="entry name" value="Phi-29-like late genes activator, P4"/>
    <property type="match status" value="1"/>
</dbReference>
<dbReference type="InterPro" id="IPR038246">
    <property type="entry name" value="Phi-29-like_sf"/>
</dbReference>
<dbReference type="InterPro" id="IPR008771">
    <property type="entry name" value="Phi-29_GP4"/>
</dbReference>
<dbReference type="Pfam" id="PF05464">
    <property type="entry name" value="Phi-29_GP4"/>
    <property type="match status" value="1"/>
</dbReference>
<proteinExistence type="inferred from homology"/>
<keyword id="KW-0010">Activator</keyword>
<keyword id="KW-0238">DNA-binding</keyword>
<keyword id="KW-0244">Early protein</keyword>
<keyword id="KW-0678">Repressor</keyword>
<keyword id="KW-0731">Sigma factor</keyword>
<keyword id="KW-0804">Transcription</keyword>
<keyword id="KW-0805">Transcription regulation</keyword>
<gene>
    <name type="primary">4</name>
</gene>